<accession>Q1QDV6</accession>
<keyword id="KW-0997">Cell inner membrane</keyword>
<keyword id="KW-1003">Cell membrane</keyword>
<keyword id="KW-0342">GTP-binding</keyword>
<keyword id="KW-0378">Hydrolase</keyword>
<keyword id="KW-0472">Membrane</keyword>
<keyword id="KW-0547">Nucleotide-binding</keyword>
<keyword id="KW-0648">Protein biosynthesis</keyword>
<organism>
    <name type="scientific">Psychrobacter cryohalolentis (strain ATCC BAA-1226 / DSM 17306 / VKM B-2378 / K5)</name>
    <dbReference type="NCBI Taxonomy" id="335284"/>
    <lineage>
        <taxon>Bacteria</taxon>
        <taxon>Pseudomonadati</taxon>
        <taxon>Pseudomonadota</taxon>
        <taxon>Gammaproteobacteria</taxon>
        <taxon>Moraxellales</taxon>
        <taxon>Moraxellaceae</taxon>
        <taxon>Psychrobacter</taxon>
    </lineage>
</organism>
<feature type="chain" id="PRO_0000265687" description="Elongation factor 4">
    <location>
        <begin position="1"/>
        <end position="598"/>
    </location>
</feature>
<feature type="domain" description="tr-type G">
    <location>
        <begin position="5"/>
        <end position="187"/>
    </location>
</feature>
<feature type="binding site" evidence="1">
    <location>
        <begin position="17"/>
        <end position="22"/>
    </location>
    <ligand>
        <name>GTP</name>
        <dbReference type="ChEBI" id="CHEBI:37565"/>
    </ligand>
</feature>
<feature type="binding site" evidence="1">
    <location>
        <begin position="134"/>
        <end position="137"/>
    </location>
    <ligand>
        <name>GTP</name>
        <dbReference type="ChEBI" id="CHEBI:37565"/>
    </ligand>
</feature>
<proteinExistence type="inferred from homology"/>
<name>LEPA_PSYCK</name>
<protein>
    <recommendedName>
        <fullName evidence="1">Elongation factor 4</fullName>
        <shortName evidence="1">EF-4</shortName>
        <ecNumber evidence="1">3.6.5.n1</ecNumber>
    </recommendedName>
    <alternativeName>
        <fullName evidence="1">Ribosomal back-translocase LepA</fullName>
    </alternativeName>
</protein>
<reference key="1">
    <citation type="submission" date="2006-03" db="EMBL/GenBank/DDBJ databases">
        <title>Complete sequence of chromosome of Psychrobacter cryohalolentis K5.</title>
        <authorList>
            <consortium name="US DOE Joint Genome Institute"/>
            <person name="Copeland A."/>
            <person name="Lucas S."/>
            <person name="Lapidus A."/>
            <person name="Barry K."/>
            <person name="Detter J.C."/>
            <person name="Glavina T."/>
            <person name="Hammon N."/>
            <person name="Israni S."/>
            <person name="Dalin E."/>
            <person name="Tice H."/>
            <person name="Pitluck S."/>
            <person name="Brettin T."/>
            <person name="Bruce D."/>
            <person name="Han C."/>
            <person name="Tapia R."/>
            <person name="Sims D.R."/>
            <person name="Gilna P."/>
            <person name="Schmutz J."/>
            <person name="Larimer F."/>
            <person name="Land M."/>
            <person name="Hauser L."/>
            <person name="Kyrpides N."/>
            <person name="Kim E."/>
            <person name="Richardson P."/>
        </authorList>
    </citation>
    <scope>NUCLEOTIDE SEQUENCE [LARGE SCALE GENOMIC DNA]</scope>
    <source>
        <strain>ATCC BAA-1226 / DSM 17306 / VKM B-2378 / K5</strain>
    </source>
</reference>
<comment type="function">
    <text evidence="1">Required for accurate and efficient protein synthesis under certain stress conditions. May act as a fidelity factor of the translation reaction, by catalyzing a one-codon backward translocation of tRNAs on improperly translocated ribosomes. Back-translocation proceeds from a post-translocation (POST) complex to a pre-translocation (PRE) complex, thus giving elongation factor G a second chance to translocate the tRNAs correctly. Binds to ribosomes in a GTP-dependent manner.</text>
</comment>
<comment type="catalytic activity">
    <reaction evidence="1">
        <text>GTP + H2O = GDP + phosphate + H(+)</text>
        <dbReference type="Rhea" id="RHEA:19669"/>
        <dbReference type="ChEBI" id="CHEBI:15377"/>
        <dbReference type="ChEBI" id="CHEBI:15378"/>
        <dbReference type="ChEBI" id="CHEBI:37565"/>
        <dbReference type="ChEBI" id="CHEBI:43474"/>
        <dbReference type="ChEBI" id="CHEBI:58189"/>
        <dbReference type="EC" id="3.6.5.n1"/>
    </reaction>
</comment>
<comment type="subcellular location">
    <subcellularLocation>
        <location evidence="1">Cell inner membrane</location>
        <topology evidence="1">Peripheral membrane protein</topology>
        <orientation evidence="1">Cytoplasmic side</orientation>
    </subcellularLocation>
</comment>
<comment type="similarity">
    <text evidence="1">Belongs to the TRAFAC class translation factor GTPase superfamily. Classic translation factor GTPase family. LepA subfamily.</text>
</comment>
<dbReference type="EC" id="3.6.5.n1" evidence="1"/>
<dbReference type="EMBL" id="CP000323">
    <property type="protein sequence ID" value="ABE74147.1"/>
    <property type="molecule type" value="Genomic_DNA"/>
</dbReference>
<dbReference type="RefSeq" id="WP_011512733.1">
    <property type="nucleotide sequence ID" value="NC_007969.1"/>
</dbReference>
<dbReference type="SMR" id="Q1QDV6"/>
<dbReference type="STRING" id="335284.Pcryo_0364"/>
<dbReference type="KEGG" id="pcr:Pcryo_0364"/>
<dbReference type="eggNOG" id="COG0481">
    <property type="taxonomic scope" value="Bacteria"/>
</dbReference>
<dbReference type="HOGENOM" id="CLU_009995_3_3_6"/>
<dbReference type="Proteomes" id="UP000002425">
    <property type="component" value="Chromosome"/>
</dbReference>
<dbReference type="GO" id="GO:0005886">
    <property type="term" value="C:plasma membrane"/>
    <property type="evidence" value="ECO:0007669"/>
    <property type="project" value="UniProtKB-SubCell"/>
</dbReference>
<dbReference type="GO" id="GO:0005525">
    <property type="term" value="F:GTP binding"/>
    <property type="evidence" value="ECO:0007669"/>
    <property type="project" value="UniProtKB-UniRule"/>
</dbReference>
<dbReference type="GO" id="GO:0003924">
    <property type="term" value="F:GTPase activity"/>
    <property type="evidence" value="ECO:0007669"/>
    <property type="project" value="UniProtKB-UniRule"/>
</dbReference>
<dbReference type="GO" id="GO:0097216">
    <property type="term" value="F:guanosine tetraphosphate binding"/>
    <property type="evidence" value="ECO:0007669"/>
    <property type="project" value="UniProtKB-ARBA"/>
</dbReference>
<dbReference type="GO" id="GO:0043022">
    <property type="term" value="F:ribosome binding"/>
    <property type="evidence" value="ECO:0007669"/>
    <property type="project" value="UniProtKB-UniRule"/>
</dbReference>
<dbReference type="GO" id="GO:0003746">
    <property type="term" value="F:translation elongation factor activity"/>
    <property type="evidence" value="ECO:0007669"/>
    <property type="project" value="UniProtKB-UniRule"/>
</dbReference>
<dbReference type="GO" id="GO:0045727">
    <property type="term" value="P:positive regulation of translation"/>
    <property type="evidence" value="ECO:0007669"/>
    <property type="project" value="UniProtKB-UniRule"/>
</dbReference>
<dbReference type="CDD" id="cd03699">
    <property type="entry name" value="EF4_II"/>
    <property type="match status" value="1"/>
</dbReference>
<dbReference type="CDD" id="cd16260">
    <property type="entry name" value="EF4_III"/>
    <property type="match status" value="1"/>
</dbReference>
<dbReference type="CDD" id="cd01890">
    <property type="entry name" value="LepA"/>
    <property type="match status" value="1"/>
</dbReference>
<dbReference type="CDD" id="cd03709">
    <property type="entry name" value="lepA_C"/>
    <property type="match status" value="1"/>
</dbReference>
<dbReference type="FunFam" id="3.40.50.300:FF:000078">
    <property type="entry name" value="Elongation factor 4"/>
    <property type="match status" value="1"/>
</dbReference>
<dbReference type="FunFam" id="2.40.30.10:FF:000015">
    <property type="entry name" value="Translation factor GUF1, mitochondrial"/>
    <property type="match status" value="1"/>
</dbReference>
<dbReference type="FunFam" id="3.30.70.240:FF:000007">
    <property type="entry name" value="Translation factor GUF1, mitochondrial"/>
    <property type="match status" value="1"/>
</dbReference>
<dbReference type="FunFam" id="3.30.70.2570:FF:000001">
    <property type="entry name" value="Translation factor GUF1, mitochondrial"/>
    <property type="match status" value="1"/>
</dbReference>
<dbReference type="FunFam" id="3.30.70.870:FF:000004">
    <property type="entry name" value="Translation factor GUF1, mitochondrial"/>
    <property type="match status" value="1"/>
</dbReference>
<dbReference type="Gene3D" id="3.30.70.240">
    <property type="match status" value="1"/>
</dbReference>
<dbReference type="Gene3D" id="3.30.70.2570">
    <property type="entry name" value="Elongation factor 4, C-terminal domain"/>
    <property type="match status" value="1"/>
</dbReference>
<dbReference type="Gene3D" id="3.30.70.870">
    <property type="entry name" value="Elongation Factor G (Translational Gtpase), domain 3"/>
    <property type="match status" value="1"/>
</dbReference>
<dbReference type="Gene3D" id="3.40.50.300">
    <property type="entry name" value="P-loop containing nucleotide triphosphate hydrolases"/>
    <property type="match status" value="1"/>
</dbReference>
<dbReference type="Gene3D" id="2.40.30.10">
    <property type="entry name" value="Translation factors"/>
    <property type="match status" value="1"/>
</dbReference>
<dbReference type="HAMAP" id="MF_00071">
    <property type="entry name" value="LepA"/>
    <property type="match status" value="1"/>
</dbReference>
<dbReference type="InterPro" id="IPR006297">
    <property type="entry name" value="EF-4"/>
</dbReference>
<dbReference type="InterPro" id="IPR035647">
    <property type="entry name" value="EFG_III/V"/>
</dbReference>
<dbReference type="InterPro" id="IPR000640">
    <property type="entry name" value="EFG_V-like"/>
</dbReference>
<dbReference type="InterPro" id="IPR004161">
    <property type="entry name" value="EFTu-like_2"/>
</dbReference>
<dbReference type="InterPro" id="IPR031157">
    <property type="entry name" value="G_TR_CS"/>
</dbReference>
<dbReference type="InterPro" id="IPR038363">
    <property type="entry name" value="LepA_C_sf"/>
</dbReference>
<dbReference type="InterPro" id="IPR013842">
    <property type="entry name" value="LepA_CTD"/>
</dbReference>
<dbReference type="InterPro" id="IPR035654">
    <property type="entry name" value="LepA_IV"/>
</dbReference>
<dbReference type="InterPro" id="IPR027417">
    <property type="entry name" value="P-loop_NTPase"/>
</dbReference>
<dbReference type="InterPro" id="IPR005225">
    <property type="entry name" value="Small_GTP-bd"/>
</dbReference>
<dbReference type="InterPro" id="IPR000795">
    <property type="entry name" value="T_Tr_GTP-bd_dom"/>
</dbReference>
<dbReference type="NCBIfam" id="TIGR01393">
    <property type="entry name" value="lepA"/>
    <property type="match status" value="1"/>
</dbReference>
<dbReference type="NCBIfam" id="TIGR00231">
    <property type="entry name" value="small_GTP"/>
    <property type="match status" value="1"/>
</dbReference>
<dbReference type="PANTHER" id="PTHR43512:SF4">
    <property type="entry name" value="TRANSLATION FACTOR GUF1 HOMOLOG, CHLOROPLASTIC"/>
    <property type="match status" value="1"/>
</dbReference>
<dbReference type="PANTHER" id="PTHR43512">
    <property type="entry name" value="TRANSLATION FACTOR GUF1-RELATED"/>
    <property type="match status" value="1"/>
</dbReference>
<dbReference type="Pfam" id="PF00679">
    <property type="entry name" value="EFG_C"/>
    <property type="match status" value="1"/>
</dbReference>
<dbReference type="Pfam" id="PF00009">
    <property type="entry name" value="GTP_EFTU"/>
    <property type="match status" value="1"/>
</dbReference>
<dbReference type="Pfam" id="PF03144">
    <property type="entry name" value="GTP_EFTU_D2"/>
    <property type="match status" value="1"/>
</dbReference>
<dbReference type="Pfam" id="PF06421">
    <property type="entry name" value="LepA_C"/>
    <property type="match status" value="1"/>
</dbReference>
<dbReference type="PRINTS" id="PR00315">
    <property type="entry name" value="ELONGATNFCT"/>
</dbReference>
<dbReference type="SUPFAM" id="SSF54980">
    <property type="entry name" value="EF-G C-terminal domain-like"/>
    <property type="match status" value="2"/>
</dbReference>
<dbReference type="SUPFAM" id="SSF52540">
    <property type="entry name" value="P-loop containing nucleoside triphosphate hydrolases"/>
    <property type="match status" value="1"/>
</dbReference>
<dbReference type="PROSITE" id="PS00301">
    <property type="entry name" value="G_TR_1"/>
    <property type="match status" value="1"/>
</dbReference>
<dbReference type="PROSITE" id="PS51722">
    <property type="entry name" value="G_TR_2"/>
    <property type="match status" value="1"/>
</dbReference>
<sequence length="598" mass="66444">MTALANIRNFSIIAHIDHGKSTLADRFIQMCGALQDREMQAQVLDSMDIERERGITIKAQSVTLYYDHPNGERYQLNFIDTPGHVDFSYEVSRSLAACEGALLVVDAAQGVEAQSVANCYTAVDQGLEVMAVLNKIDLPQVEPERVIQEIEDIIGIDAVDAPRVSAKSGLGVDKLLEALVEFIPAPTGDRDAPLQALIIDSWFDNYLGVVSLVRVRQGTIKKGDKLYIKSTKDAHLVGSIGVFTPKPLDTGILEAGEVGFIIAGIKDIAGAPVGDTITHASTPDVDRIPGFKQITPQVYAGMFPVESTDFEKFREALQKLQINDASLFFEPDTSDALGFGFRCGFLGMLHMEIIQERLEREYDLDLITTAPSVIYEIVKKDGSIIYVDNPSRLPEPNNIEEFREPIARCQILVPQDYLGNVMTLCIERRGVQVDMRFMGRQVQLIFDIPMGEVVMDFFDRLKSVSRGFASLDYNFERYQVDKLVKVDVLINGDKVDALAMIVHETQSRYRGNALVTKMKELIPRQMFDVAIQAAIGSQIIGRSTVKAMRKDVLAKCYGGDVSRKKKLLSKQKAGKKRMKQVGNVEIPQEAFLAVLQVD</sequence>
<gene>
    <name evidence="1" type="primary">lepA</name>
    <name type="ordered locus">Pcryo_0364</name>
</gene>
<evidence type="ECO:0000255" key="1">
    <source>
        <dbReference type="HAMAP-Rule" id="MF_00071"/>
    </source>
</evidence>